<evidence type="ECO:0000255" key="1">
    <source>
        <dbReference type="HAMAP-Rule" id="MF_00300"/>
    </source>
</evidence>
<dbReference type="EC" id="4.2.3.5" evidence="1"/>
<dbReference type="EMBL" id="CP000932">
    <property type="protein sequence ID" value="ACM64797.1"/>
    <property type="molecule type" value="Genomic_DNA"/>
</dbReference>
<dbReference type="RefSeq" id="WP_012662180.1">
    <property type="nucleotide sequence ID" value="NC_012039.1"/>
</dbReference>
<dbReference type="SMR" id="B9KE09"/>
<dbReference type="STRING" id="306263.Cla_1493"/>
<dbReference type="KEGG" id="cla:CLA_1493"/>
<dbReference type="PATRIC" id="fig|306263.5.peg.1473"/>
<dbReference type="eggNOG" id="COG0082">
    <property type="taxonomic scope" value="Bacteria"/>
</dbReference>
<dbReference type="HOGENOM" id="CLU_034547_0_2_7"/>
<dbReference type="UniPathway" id="UPA00053">
    <property type="reaction ID" value="UER00090"/>
</dbReference>
<dbReference type="Proteomes" id="UP000007727">
    <property type="component" value="Chromosome"/>
</dbReference>
<dbReference type="GO" id="GO:0005829">
    <property type="term" value="C:cytosol"/>
    <property type="evidence" value="ECO:0007669"/>
    <property type="project" value="TreeGrafter"/>
</dbReference>
<dbReference type="GO" id="GO:0004107">
    <property type="term" value="F:chorismate synthase activity"/>
    <property type="evidence" value="ECO:0007669"/>
    <property type="project" value="UniProtKB-UniRule"/>
</dbReference>
<dbReference type="GO" id="GO:0010181">
    <property type="term" value="F:FMN binding"/>
    <property type="evidence" value="ECO:0007669"/>
    <property type="project" value="TreeGrafter"/>
</dbReference>
<dbReference type="GO" id="GO:0008652">
    <property type="term" value="P:amino acid biosynthetic process"/>
    <property type="evidence" value="ECO:0007669"/>
    <property type="project" value="UniProtKB-KW"/>
</dbReference>
<dbReference type="GO" id="GO:0009073">
    <property type="term" value="P:aromatic amino acid family biosynthetic process"/>
    <property type="evidence" value="ECO:0007669"/>
    <property type="project" value="UniProtKB-KW"/>
</dbReference>
<dbReference type="GO" id="GO:0009423">
    <property type="term" value="P:chorismate biosynthetic process"/>
    <property type="evidence" value="ECO:0007669"/>
    <property type="project" value="UniProtKB-UniRule"/>
</dbReference>
<dbReference type="CDD" id="cd07304">
    <property type="entry name" value="Chorismate_synthase"/>
    <property type="match status" value="1"/>
</dbReference>
<dbReference type="Gene3D" id="3.60.150.10">
    <property type="entry name" value="Chorismate synthase AroC"/>
    <property type="match status" value="1"/>
</dbReference>
<dbReference type="HAMAP" id="MF_00300">
    <property type="entry name" value="Chorismate_synth"/>
    <property type="match status" value="1"/>
</dbReference>
<dbReference type="InterPro" id="IPR000453">
    <property type="entry name" value="Chorismate_synth"/>
</dbReference>
<dbReference type="InterPro" id="IPR035904">
    <property type="entry name" value="Chorismate_synth_AroC_sf"/>
</dbReference>
<dbReference type="InterPro" id="IPR020541">
    <property type="entry name" value="Chorismate_synthase_CS"/>
</dbReference>
<dbReference type="NCBIfam" id="TIGR00033">
    <property type="entry name" value="aroC"/>
    <property type="match status" value="1"/>
</dbReference>
<dbReference type="NCBIfam" id="NF003793">
    <property type="entry name" value="PRK05382.1"/>
    <property type="match status" value="1"/>
</dbReference>
<dbReference type="PANTHER" id="PTHR21085">
    <property type="entry name" value="CHORISMATE SYNTHASE"/>
    <property type="match status" value="1"/>
</dbReference>
<dbReference type="PANTHER" id="PTHR21085:SF0">
    <property type="entry name" value="CHORISMATE SYNTHASE"/>
    <property type="match status" value="1"/>
</dbReference>
<dbReference type="Pfam" id="PF01264">
    <property type="entry name" value="Chorismate_synt"/>
    <property type="match status" value="1"/>
</dbReference>
<dbReference type="PIRSF" id="PIRSF001456">
    <property type="entry name" value="Chorismate_synth"/>
    <property type="match status" value="1"/>
</dbReference>
<dbReference type="SUPFAM" id="SSF103263">
    <property type="entry name" value="Chorismate synthase, AroC"/>
    <property type="match status" value="1"/>
</dbReference>
<dbReference type="PROSITE" id="PS00787">
    <property type="entry name" value="CHORISMATE_SYNTHASE_1"/>
    <property type="match status" value="1"/>
</dbReference>
<dbReference type="PROSITE" id="PS00788">
    <property type="entry name" value="CHORISMATE_SYNTHASE_2"/>
    <property type="match status" value="1"/>
</dbReference>
<name>AROC_CAMLR</name>
<gene>
    <name evidence="1" type="primary">aroC</name>
    <name type="ordered locus">Cla_1493</name>
</gene>
<reference key="1">
    <citation type="journal article" date="2008" name="Foodborne Pathog. Dis.">
        <title>The complete genome sequence and analysis of the human pathogen Campylobacter lari.</title>
        <authorList>
            <person name="Miller W.G."/>
            <person name="Wang G."/>
            <person name="Binnewies T.T."/>
            <person name="Parker C.T."/>
        </authorList>
    </citation>
    <scope>NUCLEOTIDE SEQUENCE [LARGE SCALE GENOMIC DNA]</scope>
    <source>
        <strain>RM2100 / D67 / ATCC BAA-1060</strain>
    </source>
</reference>
<accession>B9KE09</accession>
<proteinExistence type="inferred from homology"/>
<sequence length="362" mass="39824">MNSFGIRFKFTSFGESHGQAIGCVIDGMPAGVKFDFDFLQEMLDKRKPGQNKFSTPRKEEDKAQVLSGVFEGYTTGTPISVLVYNENTRSKDYEKDVFRPAHADFTYYHKYGIRDYRGGGRASARESIARVAAGALAQMLLKEFDIEIMSGVFGVGSIDSKLSNDEFDFNCAKNSEVYALDKNLEQSFKDEILKAKKAKDSIGARVFTRVKNPIKGLGEPLYDKLDSKLAHAIMGVNAVKAIEIGSGIQSSYMYGSQNNDELKDGVFLSNHSGGILGGISNGGFIDIKTYFKPTPSIFLPQQTQNIQGENIIRELKGRHDPCVGIRGSIVVNAMVAICMADALLLNASSNLQNLQRVYGKNK</sequence>
<organism>
    <name type="scientific">Campylobacter lari (strain RM2100 / D67 / ATCC BAA-1060)</name>
    <dbReference type="NCBI Taxonomy" id="306263"/>
    <lineage>
        <taxon>Bacteria</taxon>
        <taxon>Pseudomonadati</taxon>
        <taxon>Campylobacterota</taxon>
        <taxon>Epsilonproteobacteria</taxon>
        <taxon>Campylobacterales</taxon>
        <taxon>Campylobacteraceae</taxon>
        <taxon>Campylobacter</taxon>
    </lineage>
</organism>
<keyword id="KW-0028">Amino-acid biosynthesis</keyword>
<keyword id="KW-0057">Aromatic amino acid biosynthesis</keyword>
<keyword id="KW-0274">FAD</keyword>
<keyword id="KW-0285">Flavoprotein</keyword>
<keyword id="KW-0288">FMN</keyword>
<keyword id="KW-0456">Lyase</keyword>
<keyword id="KW-0521">NADP</keyword>
<keyword id="KW-1185">Reference proteome</keyword>
<comment type="function">
    <text evidence="1">Catalyzes the anti-1,4-elimination of the C-3 phosphate and the C-6 proR hydrogen from 5-enolpyruvylshikimate-3-phosphate (EPSP) to yield chorismate, which is the branch point compound that serves as the starting substrate for the three terminal pathways of aromatic amino acid biosynthesis. This reaction introduces a second double bond into the aromatic ring system.</text>
</comment>
<comment type="catalytic activity">
    <reaction evidence="1">
        <text>5-O-(1-carboxyvinyl)-3-phosphoshikimate = chorismate + phosphate</text>
        <dbReference type="Rhea" id="RHEA:21020"/>
        <dbReference type="ChEBI" id="CHEBI:29748"/>
        <dbReference type="ChEBI" id="CHEBI:43474"/>
        <dbReference type="ChEBI" id="CHEBI:57701"/>
        <dbReference type="EC" id="4.2.3.5"/>
    </reaction>
</comment>
<comment type="cofactor">
    <cofactor evidence="1">
        <name>FMNH2</name>
        <dbReference type="ChEBI" id="CHEBI:57618"/>
    </cofactor>
    <text evidence="1">Reduced FMN (FMNH(2)).</text>
</comment>
<comment type="pathway">
    <text evidence="1">Metabolic intermediate biosynthesis; chorismate biosynthesis; chorismate from D-erythrose 4-phosphate and phosphoenolpyruvate: step 7/7.</text>
</comment>
<comment type="subunit">
    <text evidence="1">Homotetramer.</text>
</comment>
<comment type="similarity">
    <text evidence="1">Belongs to the chorismate synthase family.</text>
</comment>
<feature type="chain" id="PRO_1000132760" description="Chorismate synthase">
    <location>
        <begin position="1"/>
        <end position="362"/>
    </location>
</feature>
<feature type="binding site" evidence="1">
    <location>
        <position position="46"/>
    </location>
    <ligand>
        <name>NADP(+)</name>
        <dbReference type="ChEBI" id="CHEBI:58349"/>
    </ligand>
</feature>
<feature type="binding site" evidence="1">
    <location>
        <begin position="121"/>
        <end position="123"/>
    </location>
    <ligand>
        <name>FMN</name>
        <dbReference type="ChEBI" id="CHEBI:58210"/>
    </ligand>
</feature>
<feature type="binding site" evidence="1">
    <location>
        <begin position="237"/>
        <end position="238"/>
    </location>
    <ligand>
        <name>FMN</name>
        <dbReference type="ChEBI" id="CHEBI:58210"/>
    </ligand>
</feature>
<feature type="binding site" evidence="1">
    <location>
        <position position="277"/>
    </location>
    <ligand>
        <name>FMN</name>
        <dbReference type="ChEBI" id="CHEBI:58210"/>
    </ligand>
</feature>
<feature type="binding site" evidence="1">
    <location>
        <begin position="292"/>
        <end position="296"/>
    </location>
    <ligand>
        <name>FMN</name>
        <dbReference type="ChEBI" id="CHEBI:58210"/>
    </ligand>
</feature>
<feature type="binding site" evidence="1">
    <location>
        <position position="318"/>
    </location>
    <ligand>
        <name>FMN</name>
        <dbReference type="ChEBI" id="CHEBI:58210"/>
    </ligand>
</feature>
<protein>
    <recommendedName>
        <fullName evidence="1">Chorismate synthase</fullName>
        <shortName evidence="1">CS</shortName>
        <ecNumber evidence="1">4.2.3.5</ecNumber>
    </recommendedName>
    <alternativeName>
        <fullName evidence="1">5-enolpyruvylshikimate-3-phosphate phospholyase</fullName>
    </alternativeName>
</protein>